<evidence type="ECO:0000255" key="1">
    <source>
        <dbReference type="HAMAP-Rule" id="MF_01456"/>
    </source>
</evidence>
<organism>
    <name type="scientific">Helicobacter pylori (strain ATCC 700392 / 26695)</name>
    <name type="common">Campylobacter pylori</name>
    <dbReference type="NCBI Taxonomy" id="85962"/>
    <lineage>
        <taxon>Bacteria</taxon>
        <taxon>Pseudomonadati</taxon>
        <taxon>Campylobacterota</taxon>
        <taxon>Epsilonproteobacteria</taxon>
        <taxon>Campylobacterales</taxon>
        <taxon>Helicobacteraceae</taxon>
        <taxon>Helicobacter</taxon>
    </lineage>
</organism>
<comment type="function">
    <text evidence="1">NDH-1 shuttles electrons from NADH, via FMN and iron-sulfur (Fe-S) centers, to quinones in the respiratory chain. The immediate electron acceptor for the enzyme in this species is believed to be ubiquinone. Couples the redox reaction to proton translocation (for every two electrons transferred, four hydrogen ions are translocated across the cytoplasmic membrane), and thus conserves the redox energy in a proton gradient.</text>
</comment>
<comment type="catalytic activity">
    <reaction evidence="1">
        <text>a quinone + NADH + 5 H(+)(in) = a quinol + NAD(+) + 4 H(+)(out)</text>
        <dbReference type="Rhea" id="RHEA:57888"/>
        <dbReference type="ChEBI" id="CHEBI:15378"/>
        <dbReference type="ChEBI" id="CHEBI:24646"/>
        <dbReference type="ChEBI" id="CHEBI:57540"/>
        <dbReference type="ChEBI" id="CHEBI:57945"/>
        <dbReference type="ChEBI" id="CHEBI:132124"/>
    </reaction>
</comment>
<comment type="subunit">
    <text evidence="1">NDH-1 is composed of 14 different subunits. Subunits NuoA, H, J, K, L, M, N constitute the membrane sector of the complex.</text>
</comment>
<comment type="subcellular location">
    <subcellularLocation>
        <location evidence="1">Cell inner membrane</location>
        <topology evidence="1">Multi-pass membrane protein</topology>
    </subcellularLocation>
</comment>
<comment type="similarity">
    <text evidence="1">Belongs to the complex I subunit 4L family.</text>
</comment>
<accession>O25860</accession>
<dbReference type="EC" id="7.1.1.-" evidence="1"/>
<dbReference type="EMBL" id="AE000511">
    <property type="protein sequence ID" value="AAD08314.1"/>
    <property type="molecule type" value="Genomic_DNA"/>
</dbReference>
<dbReference type="PIR" id="F64678">
    <property type="entry name" value="F64678"/>
</dbReference>
<dbReference type="RefSeq" id="NP_208062.1">
    <property type="nucleotide sequence ID" value="NC_000915.1"/>
</dbReference>
<dbReference type="RefSeq" id="WP_000579761.1">
    <property type="nucleotide sequence ID" value="NC_018939.1"/>
</dbReference>
<dbReference type="SMR" id="O25860"/>
<dbReference type="FunCoup" id="O25860">
    <property type="interactions" value="176"/>
</dbReference>
<dbReference type="STRING" id="85962.HP_1270"/>
<dbReference type="PaxDb" id="85962-C694_06565"/>
<dbReference type="EnsemblBacteria" id="AAD08314">
    <property type="protein sequence ID" value="AAD08314"/>
    <property type="gene ID" value="HP_1270"/>
</dbReference>
<dbReference type="KEGG" id="heo:C694_06565"/>
<dbReference type="KEGG" id="hpy:HP_1270"/>
<dbReference type="PATRIC" id="fig|85962.47.peg.1363"/>
<dbReference type="eggNOG" id="COG0713">
    <property type="taxonomic scope" value="Bacteria"/>
</dbReference>
<dbReference type="InParanoid" id="O25860"/>
<dbReference type="OrthoDB" id="9810120at2"/>
<dbReference type="PhylomeDB" id="O25860"/>
<dbReference type="BioCyc" id="MetaCyc:HP_RS06265-MONOMER"/>
<dbReference type="Proteomes" id="UP000000429">
    <property type="component" value="Chromosome"/>
</dbReference>
<dbReference type="GO" id="GO:0030964">
    <property type="term" value="C:NADH dehydrogenase complex"/>
    <property type="evidence" value="ECO:0000318"/>
    <property type="project" value="GO_Central"/>
</dbReference>
<dbReference type="GO" id="GO:0005886">
    <property type="term" value="C:plasma membrane"/>
    <property type="evidence" value="ECO:0007669"/>
    <property type="project" value="UniProtKB-SubCell"/>
</dbReference>
<dbReference type="GO" id="GO:0050136">
    <property type="term" value="F:NADH:ubiquinone reductase (non-electrogenic) activity"/>
    <property type="evidence" value="ECO:0007669"/>
    <property type="project" value="UniProtKB-UniRule"/>
</dbReference>
<dbReference type="GO" id="GO:0048038">
    <property type="term" value="F:quinone binding"/>
    <property type="evidence" value="ECO:0007669"/>
    <property type="project" value="UniProtKB-KW"/>
</dbReference>
<dbReference type="GO" id="GO:0042773">
    <property type="term" value="P:ATP synthesis coupled electron transport"/>
    <property type="evidence" value="ECO:0007669"/>
    <property type="project" value="InterPro"/>
</dbReference>
<dbReference type="FunFam" id="1.10.287.3510:FF:000001">
    <property type="entry name" value="NADH-quinone oxidoreductase subunit K"/>
    <property type="match status" value="1"/>
</dbReference>
<dbReference type="Gene3D" id="1.10.287.3510">
    <property type="match status" value="1"/>
</dbReference>
<dbReference type="HAMAP" id="MF_01456">
    <property type="entry name" value="NDH1_NuoK"/>
    <property type="match status" value="1"/>
</dbReference>
<dbReference type="InterPro" id="IPR001133">
    <property type="entry name" value="NADH_UbQ_OxRdtase_chain4L/K"/>
</dbReference>
<dbReference type="InterPro" id="IPR039428">
    <property type="entry name" value="NUOK/Mnh_C1-like"/>
</dbReference>
<dbReference type="NCBIfam" id="NF004320">
    <property type="entry name" value="PRK05715.1-2"/>
    <property type="match status" value="1"/>
</dbReference>
<dbReference type="NCBIfam" id="NF004321">
    <property type="entry name" value="PRK05715.1-3"/>
    <property type="match status" value="1"/>
</dbReference>
<dbReference type="NCBIfam" id="NF004323">
    <property type="entry name" value="PRK05715.1-5"/>
    <property type="match status" value="1"/>
</dbReference>
<dbReference type="PANTHER" id="PTHR11434:SF21">
    <property type="entry name" value="NADH DEHYDROGENASE SUBUNIT 4L-RELATED"/>
    <property type="match status" value="1"/>
</dbReference>
<dbReference type="PANTHER" id="PTHR11434">
    <property type="entry name" value="NADH-UBIQUINONE OXIDOREDUCTASE SUBUNIT ND4L"/>
    <property type="match status" value="1"/>
</dbReference>
<dbReference type="Pfam" id="PF00420">
    <property type="entry name" value="Oxidored_q2"/>
    <property type="match status" value="1"/>
</dbReference>
<reference key="1">
    <citation type="journal article" date="1997" name="Nature">
        <title>The complete genome sequence of the gastric pathogen Helicobacter pylori.</title>
        <authorList>
            <person name="Tomb J.-F."/>
            <person name="White O."/>
            <person name="Kerlavage A.R."/>
            <person name="Clayton R.A."/>
            <person name="Sutton G.G."/>
            <person name="Fleischmann R.D."/>
            <person name="Ketchum K.A."/>
            <person name="Klenk H.-P."/>
            <person name="Gill S.R."/>
            <person name="Dougherty B.A."/>
            <person name="Nelson K.E."/>
            <person name="Quackenbush J."/>
            <person name="Zhou L."/>
            <person name="Kirkness E.F."/>
            <person name="Peterson S.N."/>
            <person name="Loftus B.J."/>
            <person name="Richardson D.L."/>
            <person name="Dodson R.J."/>
            <person name="Khalak H.G."/>
            <person name="Glodek A."/>
            <person name="McKenney K."/>
            <person name="FitzGerald L.M."/>
            <person name="Lee N."/>
            <person name="Adams M.D."/>
            <person name="Hickey E.K."/>
            <person name="Berg D.E."/>
            <person name="Gocayne J.D."/>
            <person name="Utterback T.R."/>
            <person name="Peterson J.D."/>
            <person name="Kelley J.M."/>
            <person name="Cotton M.D."/>
            <person name="Weidman J.F."/>
            <person name="Fujii C."/>
            <person name="Bowman C."/>
            <person name="Watthey L."/>
            <person name="Wallin E."/>
            <person name="Hayes W.S."/>
            <person name="Borodovsky M."/>
            <person name="Karp P.D."/>
            <person name="Smith H.O."/>
            <person name="Fraser C.M."/>
            <person name="Venter J.C."/>
        </authorList>
    </citation>
    <scope>NUCLEOTIDE SEQUENCE [LARGE SCALE GENOMIC DNA]</scope>
    <source>
        <strain>ATCC 700392 / 26695</strain>
    </source>
</reference>
<sequence>MIGLNHYLIVSGLLFCIGLAGMLKRKNILLLFFSTEIMLNAINIGFVAISKYTHNLDGQMFALFIISIAASEVAIGLGLVILWFKKFKSLDIDSLNAMKG</sequence>
<keyword id="KW-0997">Cell inner membrane</keyword>
<keyword id="KW-1003">Cell membrane</keyword>
<keyword id="KW-0472">Membrane</keyword>
<keyword id="KW-0520">NAD</keyword>
<keyword id="KW-0874">Quinone</keyword>
<keyword id="KW-1185">Reference proteome</keyword>
<keyword id="KW-1278">Translocase</keyword>
<keyword id="KW-0812">Transmembrane</keyword>
<keyword id="KW-1133">Transmembrane helix</keyword>
<keyword id="KW-0813">Transport</keyword>
<keyword id="KW-0830">Ubiquinone</keyword>
<feature type="chain" id="PRO_0000390091" description="NADH-quinone oxidoreductase subunit K">
    <location>
        <begin position="1"/>
        <end position="100"/>
    </location>
</feature>
<feature type="transmembrane region" description="Helical" evidence="1">
    <location>
        <begin position="1"/>
        <end position="21"/>
    </location>
</feature>
<feature type="transmembrane region" description="Helical" evidence="1">
    <location>
        <begin position="28"/>
        <end position="48"/>
    </location>
</feature>
<feature type="transmembrane region" description="Helical" evidence="1">
    <location>
        <begin position="64"/>
        <end position="84"/>
    </location>
</feature>
<name>NUOK_HELPY</name>
<proteinExistence type="inferred from homology"/>
<gene>
    <name evidence="1" type="primary">nuoK</name>
    <name type="ordered locus">HP_1270</name>
</gene>
<protein>
    <recommendedName>
        <fullName evidence="1">NADH-quinone oxidoreductase subunit K</fullName>
        <ecNumber evidence="1">7.1.1.-</ecNumber>
    </recommendedName>
    <alternativeName>
        <fullName evidence="1">NADH dehydrogenase I subunit K</fullName>
    </alternativeName>
    <alternativeName>
        <fullName evidence="1">NDH-1 subunit K</fullName>
    </alternativeName>
</protein>